<evidence type="ECO:0000255" key="1">
    <source>
        <dbReference type="HAMAP-Rule" id="MF_00294"/>
    </source>
</evidence>
<evidence type="ECO:0000305" key="2"/>
<comment type="similarity">
    <text evidence="1">Belongs to the bacterial ribosomal protein bL33 family.</text>
</comment>
<name>RL33_SYNWW</name>
<gene>
    <name evidence="1" type="primary">rpmG</name>
    <name type="ordered locus">Swol_2349</name>
</gene>
<feature type="chain" id="PRO_0000356761" description="Large ribosomal subunit protein bL33">
    <location>
        <begin position="1"/>
        <end position="49"/>
    </location>
</feature>
<keyword id="KW-1185">Reference proteome</keyword>
<keyword id="KW-0687">Ribonucleoprotein</keyword>
<keyword id="KW-0689">Ribosomal protein</keyword>
<reference key="1">
    <citation type="journal article" date="2010" name="Environ. Microbiol.">
        <title>The genome of Syntrophomonas wolfei: new insights into syntrophic metabolism and biohydrogen production.</title>
        <authorList>
            <person name="Sieber J.R."/>
            <person name="Sims D.R."/>
            <person name="Han C."/>
            <person name="Kim E."/>
            <person name="Lykidis A."/>
            <person name="Lapidus A.L."/>
            <person name="McDonnald E."/>
            <person name="Rohlin L."/>
            <person name="Culley D.E."/>
            <person name="Gunsalus R."/>
            <person name="McInerney M.J."/>
        </authorList>
    </citation>
    <scope>NUCLEOTIDE SEQUENCE [LARGE SCALE GENOMIC DNA]</scope>
    <source>
        <strain>DSM 2245B / Goettingen</strain>
    </source>
</reference>
<proteinExistence type="inferred from homology"/>
<accession>Q0AUG4</accession>
<dbReference type="EMBL" id="CP000448">
    <property type="protein sequence ID" value="ABI69640.1"/>
    <property type="molecule type" value="Genomic_DNA"/>
</dbReference>
<dbReference type="RefSeq" id="WP_011641724.1">
    <property type="nucleotide sequence ID" value="NC_008346.1"/>
</dbReference>
<dbReference type="SMR" id="Q0AUG4"/>
<dbReference type="STRING" id="335541.Swol_2349"/>
<dbReference type="KEGG" id="swo:Swol_2349"/>
<dbReference type="eggNOG" id="COG0267">
    <property type="taxonomic scope" value="Bacteria"/>
</dbReference>
<dbReference type="HOGENOM" id="CLU_190949_0_1_9"/>
<dbReference type="Proteomes" id="UP000001968">
    <property type="component" value="Chromosome"/>
</dbReference>
<dbReference type="GO" id="GO:0005737">
    <property type="term" value="C:cytoplasm"/>
    <property type="evidence" value="ECO:0007669"/>
    <property type="project" value="UniProtKB-ARBA"/>
</dbReference>
<dbReference type="GO" id="GO:1990904">
    <property type="term" value="C:ribonucleoprotein complex"/>
    <property type="evidence" value="ECO:0007669"/>
    <property type="project" value="UniProtKB-KW"/>
</dbReference>
<dbReference type="GO" id="GO:0005840">
    <property type="term" value="C:ribosome"/>
    <property type="evidence" value="ECO:0007669"/>
    <property type="project" value="UniProtKB-KW"/>
</dbReference>
<dbReference type="GO" id="GO:0003735">
    <property type="term" value="F:structural constituent of ribosome"/>
    <property type="evidence" value="ECO:0007669"/>
    <property type="project" value="InterPro"/>
</dbReference>
<dbReference type="GO" id="GO:0006412">
    <property type="term" value="P:translation"/>
    <property type="evidence" value="ECO:0007669"/>
    <property type="project" value="UniProtKB-UniRule"/>
</dbReference>
<dbReference type="Gene3D" id="2.20.28.120">
    <property type="entry name" value="Ribosomal protein L33"/>
    <property type="match status" value="1"/>
</dbReference>
<dbReference type="HAMAP" id="MF_00294">
    <property type="entry name" value="Ribosomal_bL33"/>
    <property type="match status" value="1"/>
</dbReference>
<dbReference type="InterPro" id="IPR001705">
    <property type="entry name" value="Ribosomal_bL33"/>
</dbReference>
<dbReference type="InterPro" id="IPR038584">
    <property type="entry name" value="Ribosomal_bL33_sf"/>
</dbReference>
<dbReference type="InterPro" id="IPR011332">
    <property type="entry name" value="Ribosomal_zn-bd"/>
</dbReference>
<dbReference type="NCBIfam" id="NF001764">
    <property type="entry name" value="PRK00504.1"/>
    <property type="match status" value="1"/>
</dbReference>
<dbReference type="NCBIfam" id="NF001860">
    <property type="entry name" value="PRK00595.1"/>
    <property type="match status" value="1"/>
</dbReference>
<dbReference type="NCBIfam" id="TIGR01023">
    <property type="entry name" value="rpmG_bact"/>
    <property type="match status" value="1"/>
</dbReference>
<dbReference type="PANTHER" id="PTHR43168">
    <property type="entry name" value="50S RIBOSOMAL PROTEIN L33, CHLOROPLASTIC"/>
    <property type="match status" value="1"/>
</dbReference>
<dbReference type="PANTHER" id="PTHR43168:SF2">
    <property type="entry name" value="LARGE RIBOSOMAL SUBUNIT PROTEIN BL33C"/>
    <property type="match status" value="1"/>
</dbReference>
<dbReference type="Pfam" id="PF00471">
    <property type="entry name" value="Ribosomal_L33"/>
    <property type="match status" value="1"/>
</dbReference>
<dbReference type="SUPFAM" id="SSF57829">
    <property type="entry name" value="Zn-binding ribosomal proteins"/>
    <property type="match status" value="1"/>
</dbReference>
<organism>
    <name type="scientific">Syntrophomonas wolfei subsp. wolfei (strain DSM 2245B / Goettingen)</name>
    <dbReference type="NCBI Taxonomy" id="335541"/>
    <lineage>
        <taxon>Bacteria</taxon>
        <taxon>Bacillati</taxon>
        <taxon>Bacillota</taxon>
        <taxon>Clostridia</taxon>
        <taxon>Eubacteriales</taxon>
        <taxon>Syntrophomonadaceae</taxon>
        <taxon>Syntrophomonas</taxon>
    </lineage>
</organism>
<sequence length="49" mass="5963">MRVGITLACSECKQRNYMTTRDKKKQNEKIEKKKYCRFCNTHTLHKEIK</sequence>
<protein>
    <recommendedName>
        <fullName evidence="1">Large ribosomal subunit protein bL33</fullName>
    </recommendedName>
    <alternativeName>
        <fullName evidence="2">50S ribosomal protein L33</fullName>
    </alternativeName>
</protein>